<evidence type="ECO:0000255" key="1">
    <source>
        <dbReference type="HAMAP-Rule" id="MF_00248"/>
    </source>
</evidence>
<name>HSLV_AROAE</name>
<protein>
    <recommendedName>
        <fullName evidence="1">ATP-dependent protease subunit HslV</fullName>
        <ecNumber evidence="1">3.4.25.2</ecNumber>
    </recommendedName>
</protein>
<keyword id="KW-0021">Allosteric enzyme</keyword>
<keyword id="KW-0963">Cytoplasm</keyword>
<keyword id="KW-0378">Hydrolase</keyword>
<keyword id="KW-0479">Metal-binding</keyword>
<keyword id="KW-0645">Protease</keyword>
<keyword id="KW-1185">Reference proteome</keyword>
<keyword id="KW-0915">Sodium</keyword>
<keyword id="KW-0346">Stress response</keyword>
<keyword id="KW-0888">Threonine protease</keyword>
<gene>
    <name evidence="1" type="primary">hslV</name>
    <name type="ordered locus">AZOSEA14850</name>
    <name type="ORF">ebA2638</name>
</gene>
<accession>Q5P502</accession>
<dbReference type="EC" id="3.4.25.2" evidence="1"/>
<dbReference type="EMBL" id="CR555306">
    <property type="protein sequence ID" value="CAI07610.1"/>
    <property type="molecule type" value="Genomic_DNA"/>
</dbReference>
<dbReference type="RefSeq" id="WP_011237328.1">
    <property type="nucleotide sequence ID" value="NC_006513.1"/>
</dbReference>
<dbReference type="SMR" id="Q5P502"/>
<dbReference type="STRING" id="76114.ebA2638"/>
<dbReference type="MEROPS" id="T01.006"/>
<dbReference type="KEGG" id="eba:ebA2638"/>
<dbReference type="eggNOG" id="COG5405">
    <property type="taxonomic scope" value="Bacteria"/>
</dbReference>
<dbReference type="HOGENOM" id="CLU_093872_1_0_4"/>
<dbReference type="OrthoDB" id="9804884at2"/>
<dbReference type="Proteomes" id="UP000006552">
    <property type="component" value="Chromosome"/>
</dbReference>
<dbReference type="GO" id="GO:0009376">
    <property type="term" value="C:HslUV protease complex"/>
    <property type="evidence" value="ECO:0007669"/>
    <property type="project" value="UniProtKB-UniRule"/>
</dbReference>
<dbReference type="GO" id="GO:0005839">
    <property type="term" value="C:proteasome core complex"/>
    <property type="evidence" value="ECO:0007669"/>
    <property type="project" value="InterPro"/>
</dbReference>
<dbReference type="GO" id="GO:0046872">
    <property type="term" value="F:metal ion binding"/>
    <property type="evidence" value="ECO:0007669"/>
    <property type="project" value="UniProtKB-KW"/>
</dbReference>
<dbReference type="GO" id="GO:0004298">
    <property type="term" value="F:threonine-type endopeptidase activity"/>
    <property type="evidence" value="ECO:0007669"/>
    <property type="project" value="UniProtKB-KW"/>
</dbReference>
<dbReference type="GO" id="GO:0051603">
    <property type="term" value="P:proteolysis involved in protein catabolic process"/>
    <property type="evidence" value="ECO:0007669"/>
    <property type="project" value="InterPro"/>
</dbReference>
<dbReference type="CDD" id="cd01913">
    <property type="entry name" value="protease_HslV"/>
    <property type="match status" value="1"/>
</dbReference>
<dbReference type="FunFam" id="3.60.20.10:FF:000002">
    <property type="entry name" value="ATP-dependent protease subunit HslV"/>
    <property type="match status" value="1"/>
</dbReference>
<dbReference type="Gene3D" id="3.60.20.10">
    <property type="entry name" value="Glutamine Phosphoribosylpyrophosphate, subunit 1, domain 1"/>
    <property type="match status" value="1"/>
</dbReference>
<dbReference type="HAMAP" id="MF_00248">
    <property type="entry name" value="HslV"/>
    <property type="match status" value="1"/>
</dbReference>
<dbReference type="InterPro" id="IPR022281">
    <property type="entry name" value="ATP-dep_Prtase_HsIV_su"/>
</dbReference>
<dbReference type="InterPro" id="IPR029055">
    <property type="entry name" value="Ntn_hydrolases_N"/>
</dbReference>
<dbReference type="InterPro" id="IPR001353">
    <property type="entry name" value="Proteasome_sua/b"/>
</dbReference>
<dbReference type="InterPro" id="IPR023333">
    <property type="entry name" value="Proteasome_suB-type"/>
</dbReference>
<dbReference type="NCBIfam" id="TIGR03692">
    <property type="entry name" value="ATP_dep_HslV"/>
    <property type="match status" value="1"/>
</dbReference>
<dbReference type="NCBIfam" id="NF003964">
    <property type="entry name" value="PRK05456.1"/>
    <property type="match status" value="1"/>
</dbReference>
<dbReference type="PANTHER" id="PTHR32194:SF0">
    <property type="entry name" value="ATP-DEPENDENT PROTEASE SUBUNIT HSLV"/>
    <property type="match status" value="1"/>
</dbReference>
<dbReference type="PANTHER" id="PTHR32194">
    <property type="entry name" value="METALLOPROTEASE TLDD"/>
    <property type="match status" value="1"/>
</dbReference>
<dbReference type="Pfam" id="PF00227">
    <property type="entry name" value="Proteasome"/>
    <property type="match status" value="1"/>
</dbReference>
<dbReference type="PIRSF" id="PIRSF039093">
    <property type="entry name" value="HslV"/>
    <property type="match status" value="1"/>
</dbReference>
<dbReference type="SUPFAM" id="SSF56235">
    <property type="entry name" value="N-terminal nucleophile aminohydrolases (Ntn hydrolases)"/>
    <property type="match status" value="1"/>
</dbReference>
<dbReference type="PROSITE" id="PS51476">
    <property type="entry name" value="PROTEASOME_BETA_2"/>
    <property type="match status" value="1"/>
</dbReference>
<comment type="function">
    <text evidence="1">Protease subunit of a proteasome-like degradation complex believed to be a general protein degrading machinery.</text>
</comment>
<comment type="catalytic activity">
    <reaction evidence="1">
        <text>ATP-dependent cleavage of peptide bonds with broad specificity.</text>
        <dbReference type="EC" id="3.4.25.2"/>
    </reaction>
</comment>
<comment type="activity regulation">
    <text evidence="1">Allosterically activated by HslU binding.</text>
</comment>
<comment type="subunit">
    <text evidence="1">A double ring-shaped homohexamer of HslV is capped on each side by a ring-shaped HslU homohexamer. The assembly of the HslU/HslV complex is dependent on binding of ATP.</text>
</comment>
<comment type="subcellular location">
    <subcellularLocation>
        <location evidence="1">Cytoplasm</location>
    </subcellularLocation>
</comment>
<comment type="similarity">
    <text evidence="1">Belongs to the peptidase T1B family. HslV subfamily.</text>
</comment>
<feature type="chain" id="PRO_1000012576" description="ATP-dependent protease subunit HslV">
    <location>
        <begin position="1"/>
        <end position="179"/>
    </location>
</feature>
<feature type="active site" evidence="1">
    <location>
        <position position="7"/>
    </location>
</feature>
<feature type="binding site" evidence="1">
    <location>
        <position position="162"/>
    </location>
    <ligand>
        <name>Na(+)</name>
        <dbReference type="ChEBI" id="CHEBI:29101"/>
    </ligand>
</feature>
<feature type="binding site" evidence="1">
    <location>
        <position position="165"/>
    </location>
    <ligand>
        <name>Na(+)</name>
        <dbReference type="ChEBI" id="CHEBI:29101"/>
    </ligand>
</feature>
<feature type="binding site" evidence="1">
    <location>
        <position position="168"/>
    </location>
    <ligand>
        <name>Na(+)</name>
        <dbReference type="ChEBI" id="CHEBI:29101"/>
    </ligand>
</feature>
<sequence length="179" mass="19311">MEQYHGTTILSVRRGRRVALGGDGQVTLGNVVIKATARKVRPIYQGRILAGFAGGTADAFTLFERFEAKLEKHQGNVLRSAVELAKDWRTDRMLRRLEAMLAVADPDNSLVITGNGDVLEPEQGIVAIGSGGAYAQSAARALLENTALPPEEIVKKSLQIAGDLCIYTNQSHVIEVLEG</sequence>
<organism>
    <name type="scientific">Aromatoleum aromaticum (strain DSM 19018 / LMG 30748 / EbN1)</name>
    <name type="common">Azoarcus sp. (strain EbN1)</name>
    <dbReference type="NCBI Taxonomy" id="76114"/>
    <lineage>
        <taxon>Bacteria</taxon>
        <taxon>Pseudomonadati</taxon>
        <taxon>Pseudomonadota</taxon>
        <taxon>Betaproteobacteria</taxon>
        <taxon>Rhodocyclales</taxon>
        <taxon>Rhodocyclaceae</taxon>
        <taxon>Aromatoleum</taxon>
    </lineage>
</organism>
<proteinExistence type="inferred from homology"/>
<reference key="1">
    <citation type="journal article" date="2005" name="Arch. Microbiol.">
        <title>The genome sequence of an anaerobic aromatic-degrading denitrifying bacterium, strain EbN1.</title>
        <authorList>
            <person name="Rabus R."/>
            <person name="Kube M."/>
            <person name="Heider J."/>
            <person name="Beck A."/>
            <person name="Heitmann K."/>
            <person name="Widdel F."/>
            <person name="Reinhardt R."/>
        </authorList>
    </citation>
    <scope>NUCLEOTIDE SEQUENCE [LARGE SCALE GENOMIC DNA]</scope>
    <source>
        <strain>DSM 19018 / LMG 30748 / EbN1</strain>
    </source>
</reference>